<accession>Q54XS2</accession>
<proteinExistence type="inferred from homology"/>
<reference key="1">
    <citation type="journal article" date="2005" name="Nature">
        <title>The genome of the social amoeba Dictyostelium discoideum.</title>
        <authorList>
            <person name="Eichinger L."/>
            <person name="Pachebat J.A."/>
            <person name="Gloeckner G."/>
            <person name="Rajandream M.A."/>
            <person name="Sucgang R."/>
            <person name="Berriman M."/>
            <person name="Song J."/>
            <person name="Olsen R."/>
            <person name="Szafranski K."/>
            <person name="Xu Q."/>
            <person name="Tunggal B."/>
            <person name="Kummerfeld S."/>
            <person name="Madera M."/>
            <person name="Konfortov B.A."/>
            <person name="Rivero F."/>
            <person name="Bankier A.T."/>
            <person name="Lehmann R."/>
            <person name="Hamlin N."/>
            <person name="Davies R."/>
            <person name="Gaudet P."/>
            <person name="Fey P."/>
            <person name="Pilcher K."/>
            <person name="Chen G."/>
            <person name="Saunders D."/>
            <person name="Sodergren E.J."/>
            <person name="Davis P."/>
            <person name="Kerhornou A."/>
            <person name="Nie X."/>
            <person name="Hall N."/>
            <person name="Anjard C."/>
            <person name="Hemphill L."/>
            <person name="Bason N."/>
            <person name="Farbrother P."/>
            <person name="Desany B."/>
            <person name="Just E."/>
            <person name="Morio T."/>
            <person name="Rost R."/>
            <person name="Churcher C.M."/>
            <person name="Cooper J."/>
            <person name="Haydock S."/>
            <person name="van Driessche N."/>
            <person name="Cronin A."/>
            <person name="Goodhead I."/>
            <person name="Muzny D.M."/>
            <person name="Mourier T."/>
            <person name="Pain A."/>
            <person name="Lu M."/>
            <person name="Harper D."/>
            <person name="Lindsay R."/>
            <person name="Hauser H."/>
            <person name="James K.D."/>
            <person name="Quiles M."/>
            <person name="Madan Babu M."/>
            <person name="Saito T."/>
            <person name="Buchrieser C."/>
            <person name="Wardroper A."/>
            <person name="Felder M."/>
            <person name="Thangavelu M."/>
            <person name="Johnson D."/>
            <person name="Knights A."/>
            <person name="Loulseged H."/>
            <person name="Mungall K.L."/>
            <person name="Oliver K."/>
            <person name="Price C."/>
            <person name="Quail M.A."/>
            <person name="Urushihara H."/>
            <person name="Hernandez J."/>
            <person name="Rabbinowitsch E."/>
            <person name="Steffen D."/>
            <person name="Sanders M."/>
            <person name="Ma J."/>
            <person name="Kohara Y."/>
            <person name="Sharp S."/>
            <person name="Simmonds M.N."/>
            <person name="Spiegler S."/>
            <person name="Tivey A."/>
            <person name="Sugano S."/>
            <person name="White B."/>
            <person name="Walker D."/>
            <person name="Woodward J.R."/>
            <person name="Winckler T."/>
            <person name="Tanaka Y."/>
            <person name="Shaulsky G."/>
            <person name="Schleicher M."/>
            <person name="Weinstock G.M."/>
            <person name="Rosenthal A."/>
            <person name="Cox E.C."/>
            <person name="Chisholm R.L."/>
            <person name="Gibbs R.A."/>
            <person name="Loomis W.F."/>
            <person name="Platzer M."/>
            <person name="Kay R.R."/>
            <person name="Williams J.G."/>
            <person name="Dear P.H."/>
            <person name="Noegel A.A."/>
            <person name="Barrell B.G."/>
            <person name="Kuspa A."/>
        </authorList>
    </citation>
    <scope>NUCLEOTIDE SEQUENCE [LARGE SCALE GENOMIC DNA]</scope>
    <source>
        <strain>AX4</strain>
    </source>
</reference>
<gene>
    <name type="primary">aco2</name>
    <name type="synonym">acnB</name>
    <name type="ORF">DDB_G0278779</name>
</gene>
<organism>
    <name type="scientific">Dictyostelium discoideum</name>
    <name type="common">Social amoeba</name>
    <dbReference type="NCBI Taxonomy" id="44689"/>
    <lineage>
        <taxon>Eukaryota</taxon>
        <taxon>Amoebozoa</taxon>
        <taxon>Evosea</taxon>
        <taxon>Eumycetozoa</taxon>
        <taxon>Dictyostelia</taxon>
        <taxon>Dictyosteliales</taxon>
        <taxon>Dictyosteliaceae</taxon>
        <taxon>Dictyostelium</taxon>
    </lineage>
</organism>
<evidence type="ECO:0000250" key="1"/>
<evidence type="ECO:0000255" key="2"/>
<evidence type="ECO:0000305" key="3"/>
<feature type="transit peptide" description="Mitochondrion" evidence="2">
    <location>
        <begin position="1"/>
        <end status="unknown"/>
    </location>
</feature>
<feature type="chain" id="PRO_0000328572" description="Probable aconitate hydratase, mitochondrial">
    <location>
        <begin status="unknown"/>
        <end position="771"/>
    </location>
</feature>
<feature type="binding site" evidence="1">
    <location>
        <position position="86"/>
    </location>
    <ligand>
        <name>substrate</name>
    </ligand>
</feature>
<feature type="binding site" evidence="1">
    <location>
        <begin position="179"/>
        <end position="181"/>
    </location>
    <ligand>
        <name>substrate</name>
    </ligand>
</feature>
<feature type="binding site" evidence="1">
    <location>
        <position position="372"/>
    </location>
    <ligand>
        <name>[4Fe-4S] cluster</name>
        <dbReference type="ChEBI" id="CHEBI:49883"/>
    </ligand>
</feature>
<feature type="binding site" evidence="1">
    <location>
        <position position="435"/>
    </location>
    <ligand>
        <name>[4Fe-4S] cluster</name>
        <dbReference type="ChEBI" id="CHEBI:49883"/>
    </ligand>
</feature>
<feature type="binding site" evidence="1">
    <location>
        <position position="438"/>
    </location>
    <ligand>
        <name>[4Fe-4S] cluster</name>
        <dbReference type="ChEBI" id="CHEBI:49883"/>
    </ligand>
</feature>
<feature type="binding site" evidence="1">
    <location>
        <position position="461"/>
    </location>
    <ligand>
        <name>substrate</name>
    </ligand>
</feature>
<feature type="binding site" evidence="1">
    <location>
        <position position="466"/>
    </location>
    <ligand>
        <name>substrate</name>
    </ligand>
</feature>
<feature type="binding site" evidence="1">
    <location>
        <position position="594"/>
    </location>
    <ligand>
        <name>substrate</name>
    </ligand>
</feature>
<feature type="binding site" evidence="1">
    <location>
        <begin position="657"/>
        <end position="658"/>
    </location>
    <ligand>
        <name>substrate</name>
    </ligand>
</feature>
<comment type="function">
    <text evidence="1">Catalyzes the isomerization of citrate to isocitrate via cis-aconitate.</text>
</comment>
<comment type="catalytic activity">
    <reaction>
        <text>citrate = D-threo-isocitrate</text>
        <dbReference type="Rhea" id="RHEA:10336"/>
        <dbReference type="ChEBI" id="CHEBI:15562"/>
        <dbReference type="ChEBI" id="CHEBI:16947"/>
        <dbReference type="EC" id="4.2.1.3"/>
    </reaction>
</comment>
<comment type="cofactor">
    <cofactor evidence="1">
        <name>[4Fe-4S] cluster</name>
        <dbReference type="ChEBI" id="CHEBI:49883"/>
    </cofactor>
    <text evidence="1">Binds 1 [4Fe-4S] cluster per subunit.</text>
</comment>
<comment type="pathway">
    <text>Carbohydrate metabolism; tricarboxylic acid cycle; isocitrate from oxaloacetate: step 2/2.</text>
</comment>
<comment type="subunit">
    <text evidence="1">Monomer.</text>
</comment>
<comment type="subcellular location">
    <subcellularLocation>
        <location evidence="1">Mitochondrion</location>
    </subcellularLocation>
</comment>
<comment type="similarity">
    <text evidence="3">Belongs to the aconitase/IPM isomerase family.</text>
</comment>
<dbReference type="EC" id="4.2.1.3"/>
<dbReference type="EMBL" id="AAFI02000024">
    <property type="protein sequence ID" value="EAL67991.1"/>
    <property type="molecule type" value="Genomic_DNA"/>
</dbReference>
<dbReference type="RefSeq" id="XP_641958.1">
    <property type="nucleotide sequence ID" value="XM_636866.1"/>
</dbReference>
<dbReference type="SMR" id="Q54XS2"/>
<dbReference type="FunCoup" id="Q54XS2">
    <property type="interactions" value="489"/>
</dbReference>
<dbReference type="STRING" id="44689.Q54XS2"/>
<dbReference type="GlyGen" id="Q54XS2">
    <property type="glycosylation" value="1 site"/>
</dbReference>
<dbReference type="PaxDb" id="44689-DDB0230168"/>
<dbReference type="EnsemblProtists" id="EAL67991">
    <property type="protein sequence ID" value="EAL67991"/>
    <property type="gene ID" value="DDB_G0278779"/>
</dbReference>
<dbReference type="GeneID" id="8621690"/>
<dbReference type="KEGG" id="ddi:DDB_G0278779"/>
<dbReference type="dictyBase" id="DDB_G0278779">
    <property type="gene designation" value="aco2"/>
</dbReference>
<dbReference type="VEuPathDB" id="AmoebaDB:DDB_G0278779"/>
<dbReference type="eggNOG" id="KOG0453">
    <property type="taxonomic scope" value="Eukaryota"/>
</dbReference>
<dbReference type="HOGENOM" id="CLU_006714_2_2_1"/>
<dbReference type="InParanoid" id="Q54XS2"/>
<dbReference type="OMA" id="KKQGMLG"/>
<dbReference type="PhylomeDB" id="Q54XS2"/>
<dbReference type="Reactome" id="R-DDI-71403">
    <property type="pathway name" value="Citric acid cycle (TCA cycle)"/>
</dbReference>
<dbReference type="Reactome" id="R-DDI-9837999">
    <property type="pathway name" value="Mitochondrial protein degradation"/>
</dbReference>
<dbReference type="Reactome" id="R-DDI-9854311">
    <property type="pathway name" value="Maturation of TCA enzymes and regulation of TCA cycle"/>
</dbReference>
<dbReference type="UniPathway" id="UPA00223">
    <property type="reaction ID" value="UER00718"/>
</dbReference>
<dbReference type="PRO" id="PR:Q54XS2"/>
<dbReference type="Proteomes" id="UP000002195">
    <property type="component" value="Chromosome 3"/>
</dbReference>
<dbReference type="GO" id="GO:0005829">
    <property type="term" value="C:cytosol"/>
    <property type="evidence" value="ECO:0000318"/>
    <property type="project" value="GO_Central"/>
</dbReference>
<dbReference type="GO" id="GO:0031012">
    <property type="term" value="C:extracellular matrix"/>
    <property type="evidence" value="ECO:0007005"/>
    <property type="project" value="dictyBase"/>
</dbReference>
<dbReference type="GO" id="GO:0005739">
    <property type="term" value="C:mitochondrion"/>
    <property type="evidence" value="ECO:0000318"/>
    <property type="project" value="GO_Central"/>
</dbReference>
<dbReference type="GO" id="GO:0051539">
    <property type="term" value="F:4 iron, 4 sulfur cluster binding"/>
    <property type="evidence" value="ECO:0000318"/>
    <property type="project" value="GO_Central"/>
</dbReference>
<dbReference type="GO" id="GO:0003994">
    <property type="term" value="F:aconitate hydratase activity"/>
    <property type="evidence" value="ECO:0000318"/>
    <property type="project" value="GO_Central"/>
</dbReference>
<dbReference type="GO" id="GO:0046872">
    <property type="term" value="F:metal ion binding"/>
    <property type="evidence" value="ECO:0007669"/>
    <property type="project" value="UniProtKB-KW"/>
</dbReference>
<dbReference type="GO" id="GO:0006099">
    <property type="term" value="P:tricarboxylic acid cycle"/>
    <property type="evidence" value="ECO:0000318"/>
    <property type="project" value="GO_Central"/>
</dbReference>
<dbReference type="CDD" id="cd01584">
    <property type="entry name" value="AcnA_Mitochondrial"/>
    <property type="match status" value="1"/>
</dbReference>
<dbReference type="FunFam" id="3.20.19.10:FF:000002">
    <property type="entry name" value="Aconitate hydratase, mitochondrial"/>
    <property type="match status" value="1"/>
</dbReference>
<dbReference type="FunFam" id="3.30.499.10:FF:000003">
    <property type="entry name" value="Aconitate hydratase, mitochondrial"/>
    <property type="match status" value="1"/>
</dbReference>
<dbReference type="FunFam" id="3.30.499.10:FF:000004">
    <property type="entry name" value="Aconitate hydratase, mitochondrial"/>
    <property type="match status" value="1"/>
</dbReference>
<dbReference type="FunFam" id="3.40.1060.10:FF:000001">
    <property type="entry name" value="Aconitate hydratase, mitochondrial"/>
    <property type="match status" value="1"/>
</dbReference>
<dbReference type="Gene3D" id="3.40.1060.10">
    <property type="entry name" value="Aconitase, Domain 2"/>
    <property type="match status" value="1"/>
</dbReference>
<dbReference type="Gene3D" id="3.30.499.10">
    <property type="entry name" value="Aconitase, domain 3"/>
    <property type="match status" value="2"/>
</dbReference>
<dbReference type="Gene3D" id="3.20.19.10">
    <property type="entry name" value="Aconitase, domain 4"/>
    <property type="match status" value="1"/>
</dbReference>
<dbReference type="InterPro" id="IPR015931">
    <property type="entry name" value="Acnase/IPM_dHydase_lsu_aba_1/3"/>
</dbReference>
<dbReference type="InterPro" id="IPR001030">
    <property type="entry name" value="Acoase/IPM_deHydtase_lsu_aba"/>
</dbReference>
<dbReference type="InterPro" id="IPR015928">
    <property type="entry name" value="Aconitase/3IPM_dehydase_swvl"/>
</dbReference>
<dbReference type="InterPro" id="IPR050926">
    <property type="entry name" value="Aconitase/IPM_isomerase"/>
</dbReference>
<dbReference type="InterPro" id="IPR018136">
    <property type="entry name" value="Aconitase_4Fe-4S_BS"/>
</dbReference>
<dbReference type="InterPro" id="IPR036008">
    <property type="entry name" value="Aconitase_4Fe-4S_dom"/>
</dbReference>
<dbReference type="InterPro" id="IPR015932">
    <property type="entry name" value="Aconitase_dom2"/>
</dbReference>
<dbReference type="InterPro" id="IPR006248">
    <property type="entry name" value="Aconitase_mito-like"/>
</dbReference>
<dbReference type="InterPro" id="IPR000573">
    <property type="entry name" value="AconitaseA/IPMdHydase_ssu_swvl"/>
</dbReference>
<dbReference type="NCBIfam" id="TIGR01340">
    <property type="entry name" value="aconitase_mito"/>
    <property type="match status" value="1"/>
</dbReference>
<dbReference type="NCBIfam" id="NF005558">
    <property type="entry name" value="PRK07229.1"/>
    <property type="match status" value="1"/>
</dbReference>
<dbReference type="PANTHER" id="PTHR43160">
    <property type="entry name" value="ACONITATE HYDRATASE B"/>
    <property type="match status" value="1"/>
</dbReference>
<dbReference type="PANTHER" id="PTHR43160:SF3">
    <property type="entry name" value="ACONITATE HYDRATASE, MITOCHONDRIAL"/>
    <property type="match status" value="1"/>
</dbReference>
<dbReference type="Pfam" id="PF00330">
    <property type="entry name" value="Aconitase"/>
    <property type="match status" value="1"/>
</dbReference>
<dbReference type="Pfam" id="PF00694">
    <property type="entry name" value="Aconitase_C"/>
    <property type="match status" value="1"/>
</dbReference>
<dbReference type="PRINTS" id="PR00415">
    <property type="entry name" value="ACONITASE"/>
</dbReference>
<dbReference type="SUPFAM" id="SSF53732">
    <property type="entry name" value="Aconitase iron-sulfur domain"/>
    <property type="match status" value="1"/>
</dbReference>
<dbReference type="SUPFAM" id="SSF52016">
    <property type="entry name" value="LeuD/IlvD-like"/>
    <property type="match status" value="1"/>
</dbReference>
<dbReference type="PROSITE" id="PS00450">
    <property type="entry name" value="ACONITASE_1"/>
    <property type="match status" value="1"/>
</dbReference>
<dbReference type="PROSITE" id="PS01244">
    <property type="entry name" value="ACONITASE_2"/>
    <property type="match status" value="1"/>
</dbReference>
<protein>
    <recommendedName>
        <fullName>Probable aconitate hydratase, mitochondrial</fullName>
        <shortName>Aconitase</shortName>
        <ecNumber>4.2.1.3</ecNumber>
    </recommendedName>
    <alternativeName>
        <fullName>Citrate hydro-lyase</fullName>
    </alternativeName>
</protein>
<keyword id="KW-0004">4Fe-4S</keyword>
<keyword id="KW-0408">Iron</keyword>
<keyword id="KW-0411">Iron-sulfur</keyword>
<keyword id="KW-0456">Lyase</keyword>
<keyword id="KW-0479">Metal-binding</keyword>
<keyword id="KW-0496">Mitochondrion</keyword>
<keyword id="KW-1185">Reference proteome</keyword>
<keyword id="KW-0809">Transit peptide</keyword>
<keyword id="KW-0816">Tricarboxylic acid cycle</keyword>
<name>ACON_DICDI</name>
<sequence>MNSLVKGISKVRSTRSFSTVSMSPLEPNKKLNYEGIDAKLKQFRLHHNKPLTLAEKIIYGHLEDPSTKVERGITYLKLHPDRVAMQDATAQMAVLQFMSAGLPETAVPTTIHCDHLIEAYKGGEKDLEVAKDINKEVYDFLSTSAKKFGMGFWKPGSGIIHQIVLENYAFPGGLMIGTDSHTPNAGGLGMVAVGVGGADAVDVMAGIPWELKAPKIIGVKLTGSLKGWSSPKDVILRVADILTVKGGTGAIVEYFGSGVESLSCTGMATICNMGAEIGATTSLFPFNKRMVDYLNSTGRSNIANAANSFKHNLVADPNAHYDQLIELNLDTLEPYINGPFTPDLGHPLSKFAESVKTNNWPAELKVGLIGSCTNSSYEDMSRSASVAQQALDKGITAKAKFTITPGSEQIRATIERDGQMKVLEKVGGVVLANACGPCIGQWKREDVPKGEKNSIITSYNRNFTGRNDSNVNTHAFVASPEIVTALTIAGDITFNPMTDFLTDKDGNKFKLTPPTGDELPSRGFDAGENTYQPPSPNGQNINVIVDSESSRLQLLQPFAPWDKKDLVDMQVLIKVQGKCTTDHISMAGPWLKYRGHLDNISNNMLIGAINSENGKANAVLNQFTGEIGPVPTVARDYKKRGVNWIVVGDENYGEGSSREHAALEPRHLGGKAILVKSFARIHETNLKKQGILPLTFANPSDYDKISGDDRISIIGLKDLAPGKQLTLIVKSAKQGSEFEIKANHTMNAGQIEWFKAGSALNYIKSEKAKKN</sequence>